<comment type="function">
    <text evidence="2">May contribute to degradation of proteins cross-linked by transglutaminases by degrading the cross-link between a lysine and a glutamic acid residue. Catalyzes the formation of 5-oxo-L-proline from L-gamma-glutamyl-L-epsilon-lysine.</text>
</comment>
<comment type="catalytic activity">
    <reaction evidence="2">
        <text>epsilon-(gamma-L-glutamyl)-L-lysine = 5-oxo-L-proline + L-lysine</text>
        <dbReference type="Rhea" id="RHEA:16961"/>
        <dbReference type="ChEBI" id="CHEBI:32551"/>
        <dbReference type="ChEBI" id="CHEBI:58402"/>
        <dbReference type="ChEBI" id="CHEBI:133752"/>
        <dbReference type="EC" id="4.3.2.8"/>
    </reaction>
</comment>
<comment type="similarity">
    <text evidence="3">Belongs to the gamma-glutamylcyclotransferase family.</text>
</comment>
<name>GGACC_DANRE</name>
<feature type="chain" id="PRO_0000320207" description="Gamma-glutamylaminecyclotransferase C">
    <location>
        <begin position="1"/>
        <end position="152"/>
    </location>
</feature>
<feature type="active site" description="Proton acceptor" evidence="1">
    <location>
        <position position="84"/>
    </location>
</feature>
<feature type="binding site" evidence="1">
    <location>
        <begin position="9"/>
        <end position="12"/>
    </location>
    <ligand>
        <name>substrate</name>
    </ligand>
</feature>
<accession>A3KNL6</accession>
<gene>
    <name type="primary">ggact.3</name>
    <name type="ORF">zgc:162208</name>
</gene>
<keyword id="KW-0456">Lyase</keyword>
<keyword id="KW-1185">Reference proteome</keyword>
<sequence length="152" mass="17443">MSTHHVFVYGSLKKGQPNHHELLNSNNGQAEFITCAQTKEPYPLVIATKHNIPFLLNVPGSGKQVSGEIYSVDQKMLEFLDWFEKCPDWYQRTSIQLEILKGNGESGRIEEASVYSKINFEPDWLNKPTHESYDTNGDHGLKFVCREDRKDD</sequence>
<organism>
    <name type="scientific">Danio rerio</name>
    <name type="common">Zebrafish</name>
    <name type="synonym">Brachydanio rerio</name>
    <dbReference type="NCBI Taxonomy" id="7955"/>
    <lineage>
        <taxon>Eukaryota</taxon>
        <taxon>Metazoa</taxon>
        <taxon>Chordata</taxon>
        <taxon>Craniata</taxon>
        <taxon>Vertebrata</taxon>
        <taxon>Euteleostomi</taxon>
        <taxon>Actinopterygii</taxon>
        <taxon>Neopterygii</taxon>
        <taxon>Teleostei</taxon>
        <taxon>Ostariophysi</taxon>
        <taxon>Cypriniformes</taxon>
        <taxon>Danionidae</taxon>
        <taxon>Danioninae</taxon>
        <taxon>Danio</taxon>
    </lineage>
</organism>
<protein>
    <recommendedName>
        <fullName>Gamma-glutamylaminecyclotransferase C</fullName>
        <shortName>GGACT C</shortName>
        <ecNumber evidence="2">4.3.2.8</ecNumber>
    </recommendedName>
    <alternativeName>
        <fullName>AIG2-like domain-containing protein 1-C</fullName>
    </alternativeName>
    <alternativeName>
        <fullName>Gamma-glutamylamine cyclotransferase C</fullName>
    </alternativeName>
    <alternativeName>
        <fullName>Gamma-glutamylamine cyclotransferase, tandem duplicate 3</fullName>
    </alternativeName>
</protein>
<proteinExistence type="evidence at transcript level"/>
<evidence type="ECO:0000250" key="1"/>
<evidence type="ECO:0000250" key="2">
    <source>
        <dbReference type="UniProtKB" id="Q9BVM4"/>
    </source>
</evidence>
<evidence type="ECO:0000305" key="3"/>
<reference key="1">
    <citation type="submission" date="2007-03" db="EMBL/GenBank/DDBJ databases">
        <authorList>
            <consortium name="NIH - Zebrafish Gene Collection (ZGC) project"/>
        </authorList>
    </citation>
    <scope>NUCLEOTIDE SEQUENCE [LARGE SCALE MRNA]</scope>
</reference>
<dbReference type="EC" id="4.3.2.8" evidence="2"/>
<dbReference type="EMBL" id="BC133906">
    <property type="protein sequence ID" value="AAI33907.1"/>
    <property type="molecule type" value="mRNA"/>
</dbReference>
<dbReference type="RefSeq" id="NP_001083029.1">
    <property type="nucleotide sequence ID" value="NM_001089560.2"/>
</dbReference>
<dbReference type="SMR" id="A3KNL6"/>
<dbReference type="FunCoup" id="A3KNL6">
    <property type="interactions" value="381"/>
</dbReference>
<dbReference type="STRING" id="7955.ENSDARP00000094561"/>
<dbReference type="PaxDb" id="7955-ENSDARP00000094561"/>
<dbReference type="PeptideAtlas" id="A3KNL6"/>
<dbReference type="Ensembl" id="ENSDART00000103785">
    <property type="protein sequence ID" value="ENSDARP00000094561"/>
    <property type="gene ID" value="ENSDARG00000070579"/>
</dbReference>
<dbReference type="Ensembl" id="ENSDART00000152555">
    <property type="protein sequence ID" value="ENSDARP00000126618"/>
    <property type="gene ID" value="ENSDARG00000070579"/>
</dbReference>
<dbReference type="Ensembl" id="ENSDART00000190207">
    <property type="protein sequence ID" value="ENSDARP00000157475"/>
    <property type="gene ID" value="ENSDARG00000070579"/>
</dbReference>
<dbReference type="GeneID" id="100038780"/>
<dbReference type="KEGG" id="dre:100038780"/>
<dbReference type="AGR" id="ZFIN:ZDB-GENE-070424-26"/>
<dbReference type="CTD" id="100038780"/>
<dbReference type="ZFIN" id="ZDB-GENE-070424-26">
    <property type="gene designation" value="ggact.3"/>
</dbReference>
<dbReference type="eggNOG" id="KOG4450">
    <property type="taxonomic scope" value="Eukaryota"/>
</dbReference>
<dbReference type="HOGENOM" id="CLU_083466_1_0_1"/>
<dbReference type="InParanoid" id="A3KNL6"/>
<dbReference type="OMA" id="EKVPTMY"/>
<dbReference type="OrthoDB" id="113620at2759"/>
<dbReference type="PhylomeDB" id="A3KNL6"/>
<dbReference type="TreeFam" id="TF323258"/>
<dbReference type="PRO" id="PR:A3KNL6"/>
<dbReference type="Proteomes" id="UP000000437">
    <property type="component" value="Chromosome 1"/>
</dbReference>
<dbReference type="Bgee" id="ENSDARG00000070579">
    <property type="expression patterns" value="Expressed in granulocyte and 17 other cell types or tissues"/>
</dbReference>
<dbReference type="GO" id="GO:0005829">
    <property type="term" value="C:cytosol"/>
    <property type="evidence" value="ECO:0000318"/>
    <property type="project" value="GO_Central"/>
</dbReference>
<dbReference type="GO" id="GO:0061929">
    <property type="term" value="F:gamma-glutamylaminecyclotransferase activity"/>
    <property type="evidence" value="ECO:0000250"/>
    <property type="project" value="UniProtKB"/>
</dbReference>
<dbReference type="GO" id="GO:0042219">
    <property type="term" value="P:modified amino acid catabolic process"/>
    <property type="evidence" value="ECO:0000250"/>
    <property type="project" value="UniProtKB"/>
</dbReference>
<dbReference type="CDD" id="cd06661">
    <property type="entry name" value="GGCT_like"/>
    <property type="match status" value="1"/>
</dbReference>
<dbReference type="FunFam" id="3.10.490.10:FF:000008">
    <property type="entry name" value="Gamma-glutamylaminecyclotransferase A"/>
    <property type="match status" value="1"/>
</dbReference>
<dbReference type="Gene3D" id="3.10.490.10">
    <property type="entry name" value="Gamma-glutamyl cyclotransferase-like"/>
    <property type="match status" value="1"/>
</dbReference>
<dbReference type="InterPro" id="IPR009288">
    <property type="entry name" value="AIG2-like_dom"/>
</dbReference>
<dbReference type="InterPro" id="IPR039126">
    <property type="entry name" value="GGACT"/>
</dbReference>
<dbReference type="InterPro" id="IPR013024">
    <property type="entry name" value="GGCT-like"/>
</dbReference>
<dbReference type="InterPro" id="IPR036568">
    <property type="entry name" value="GGCT-like_sf"/>
</dbReference>
<dbReference type="PANTHER" id="PTHR12510:SF4">
    <property type="entry name" value="GAMMA-GLUTAMYLAMINECYCLOTRANSFERASE"/>
    <property type="match status" value="1"/>
</dbReference>
<dbReference type="PANTHER" id="PTHR12510">
    <property type="entry name" value="TROPONIN C-AKIN-1 PROTEIN"/>
    <property type="match status" value="1"/>
</dbReference>
<dbReference type="Pfam" id="PF06094">
    <property type="entry name" value="GGACT"/>
    <property type="match status" value="1"/>
</dbReference>
<dbReference type="SUPFAM" id="SSF110857">
    <property type="entry name" value="Gamma-glutamyl cyclotransferase-like"/>
    <property type="match status" value="1"/>
</dbReference>